<name>PPDK_RICCN</name>
<protein>
    <recommendedName>
        <fullName>Pyruvate, phosphate dikinase</fullName>
        <ecNumber evidence="3">2.7.9.1</ecNumber>
    </recommendedName>
    <alternativeName>
        <fullName>Pyruvate, orthophosphate dikinase</fullName>
    </alternativeName>
</protein>
<accession>Q92HI8</accession>
<comment type="function">
    <text evidence="3">Catalyzes the reversible phosphorylation of pyruvate and phosphate.</text>
</comment>
<comment type="catalytic activity">
    <reaction evidence="3">
        <text>pyruvate + phosphate + ATP = phosphoenolpyruvate + AMP + diphosphate + H(+)</text>
        <dbReference type="Rhea" id="RHEA:10756"/>
        <dbReference type="ChEBI" id="CHEBI:15361"/>
        <dbReference type="ChEBI" id="CHEBI:15378"/>
        <dbReference type="ChEBI" id="CHEBI:30616"/>
        <dbReference type="ChEBI" id="CHEBI:33019"/>
        <dbReference type="ChEBI" id="CHEBI:43474"/>
        <dbReference type="ChEBI" id="CHEBI:58702"/>
        <dbReference type="ChEBI" id="CHEBI:456215"/>
        <dbReference type="EC" id="2.7.9.1"/>
    </reaction>
</comment>
<comment type="cofactor">
    <cofactor evidence="2">
        <name>Mg(2+)</name>
        <dbReference type="ChEBI" id="CHEBI:18420"/>
    </cofactor>
</comment>
<comment type="activity regulation">
    <text evidence="1">Activated by light-induced dephosphorylation. Inhibited by dark-induced phosphorylation. Both reactions are catalyzed by PDRP1 (By similarity).</text>
</comment>
<comment type="subunit">
    <text evidence="1">Homodimer.</text>
</comment>
<comment type="domain">
    <text evidence="1">The N-terminal domain contains the ATP/Pi active site, the central domain the pyrophosphate/phosphate carrier histidine, and the C-terminal domain the pyruvate active site.</text>
</comment>
<comment type="PTM">
    <text evidence="1">Phosphorylation of Thr-457 in the dark inactivates the enzyme. Dephosphorylation upon light stimulation reactivates the enzyme (By similarity).</text>
</comment>
<comment type="miscellaneous">
    <text>The reaction takes place in three steps, each mediated by a carrier histidine residue located on the surface of the central domain. The two first partial reactions are catalyzed at an active site located on the N-terminal domain, and the third partial reaction is catalyzed at an active site located on the C-terminal domain. For catalytic turnover, the central domain swivels from the concave surface of the N-terminal domain to that of the C-terminal domain.</text>
</comment>
<comment type="similarity">
    <text evidence="5">Belongs to the PEP-utilizing enzyme family.</text>
</comment>
<comment type="sequence caution" evidence="5">
    <conflict type="erroneous initiation">
        <sequence resource="EMBL-CDS" id="AAL03321"/>
    </conflict>
</comment>
<proteinExistence type="inferred from homology"/>
<dbReference type="EC" id="2.7.9.1" evidence="3"/>
<dbReference type="EMBL" id="AE006914">
    <property type="protein sequence ID" value="AAL03321.1"/>
    <property type="status" value="ALT_INIT"/>
    <property type="molecule type" value="Genomic_DNA"/>
</dbReference>
<dbReference type="PIR" id="G97797">
    <property type="entry name" value="G97797"/>
</dbReference>
<dbReference type="RefSeq" id="WP_041471726.1">
    <property type="nucleotide sequence ID" value="NC_003103.1"/>
</dbReference>
<dbReference type="SMR" id="Q92HI8"/>
<dbReference type="GeneID" id="927758"/>
<dbReference type="KEGG" id="rco:RC0783"/>
<dbReference type="PATRIC" id="fig|272944.4.peg.888"/>
<dbReference type="HOGENOM" id="CLU_015345_0_2_5"/>
<dbReference type="Proteomes" id="UP000000816">
    <property type="component" value="Chromosome"/>
</dbReference>
<dbReference type="GO" id="GO:0005524">
    <property type="term" value="F:ATP binding"/>
    <property type="evidence" value="ECO:0007669"/>
    <property type="project" value="UniProtKB-KW"/>
</dbReference>
<dbReference type="GO" id="GO:0016301">
    <property type="term" value="F:kinase activity"/>
    <property type="evidence" value="ECO:0007669"/>
    <property type="project" value="UniProtKB-KW"/>
</dbReference>
<dbReference type="GO" id="GO:0046872">
    <property type="term" value="F:metal ion binding"/>
    <property type="evidence" value="ECO:0007669"/>
    <property type="project" value="UniProtKB-KW"/>
</dbReference>
<dbReference type="GO" id="GO:0050242">
    <property type="term" value="F:pyruvate, phosphate dikinase activity"/>
    <property type="evidence" value="ECO:0007669"/>
    <property type="project" value="UniProtKB-EC"/>
</dbReference>
<dbReference type="Gene3D" id="1.20.80.30">
    <property type="match status" value="1"/>
</dbReference>
<dbReference type="Gene3D" id="3.30.1490.20">
    <property type="entry name" value="ATP-grasp fold, A domain"/>
    <property type="match status" value="1"/>
</dbReference>
<dbReference type="Gene3D" id="3.30.470.20">
    <property type="entry name" value="ATP-grasp fold, B domain"/>
    <property type="match status" value="1"/>
</dbReference>
<dbReference type="Gene3D" id="3.20.20.60">
    <property type="entry name" value="Phosphoenolpyruvate-binding domains"/>
    <property type="match status" value="1"/>
</dbReference>
<dbReference type="Gene3D" id="3.50.30.10">
    <property type="entry name" value="Phosphohistidine domain"/>
    <property type="match status" value="1"/>
</dbReference>
<dbReference type="Gene3D" id="1.10.189.10">
    <property type="entry name" value="Pyruvate Phosphate Dikinase, domain 2"/>
    <property type="match status" value="1"/>
</dbReference>
<dbReference type="InterPro" id="IPR013815">
    <property type="entry name" value="ATP_grasp_subdomain_1"/>
</dbReference>
<dbReference type="InterPro" id="IPR008279">
    <property type="entry name" value="PEP-util_enz_mobile_dom"/>
</dbReference>
<dbReference type="InterPro" id="IPR018274">
    <property type="entry name" value="PEP_util_AS"/>
</dbReference>
<dbReference type="InterPro" id="IPR000121">
    <property type="entry name" value="PEP_util_C"/>
</dbReference>
<dbReference type="InterPro" id="IPR023151">
    <property type="entry name" value="PEP_util_CS"/>
</dbReference>
<dbReference type="InterPro" id="IPR036637">
    <property type="entry name" value="Phosphohistidine_dom_sf"/>
</dbReference>
<dbReference type="InterPro" id="IPR002192">
    <property type="entry name" value="PPDK_AMP/ATP-bd"/>
</dbReference>
<dbReference type="InterPro" id="IPR010121">
    <property type="entry name" value="Pyruvate_phosphate_dikinase"/>
</dbReference>
<dbReference type="InterPro" id="IPR015813">
    <property type="entry name" value="Pyrv/PenolPyrv_kinase-like_dom"/>
</dbReference>
<dbReference type="InterPro" id="IPR040442">
    <property type="entry name" value="Pyrv_kinase-like_dom_sf"/>
</dbReference>
<dbReference type="NCBIfam" id="NF004531">
    <property type="entry name" value="PRK05878.1"/>
    <property type="match status" value="1"/>
</dbReference>
<dbReference type="NCBIfam" id="TIGR01828">
    <property type="entry name" value="pyru_phos_dikin"/>
    <property type="match status" value="1"/>
</dbReference>
<dbReference type="PANTHER" id="PTHR22931">
    <property type="entry name" value="PHOSPHOENOLPYRUVATE DIKINASE-RELATED"/>
    <property type="match status" value="1"/>
</dbReference>
<dbReference type="PANTHER" id="PTHR22931:SF9">
    <property type="entry name" value="PYRUVATE, PHOSPHATE DIKINASE 1, CHLOROPLASTIC"/>
    <property type="match status" value="1"/>
</dbReference>
<dbReference type="Pfam" id="PF00391">
    <property type="entry name" value="PEP-utilizers"/>
    <property type="match status" value="1"/>
</dbReference>
<dbReference type="Pfam" id="PF02896">
    <property type="entry name" value="PEP-utilizers_C"/>
    <property type="match status" value="1"/>
</dbReference>
<dbReference type="Pfam" id="PF01326">
    <property type="entry name" value="PPDK_N"/>
    <property type="match status" value="3"/>
</dbReference>
<dbReference type="PIRSF" id="PIRSF000853">
    <property type="entry name" value="PPDK"/>
    <property type="match status" value="1"/>
</dbReference>
<dbReference type="SUPFAM" id="SSF56059">
    <property type="entry name" value="Glutathione synthetase ATP-binding domain-like"/>
    <property type="match status" value="1"/>
</dbReference>
<dbReference type="SUPFAM" id="SSF51621">
    <property type="entry name" value="Phosphoenolpyruvate/pyruvate domain"/>
    <property type="match status" value="1"/>
</dbReference>
<dbReference type="SUPFAM" id="SSF52009">
    <property type="entry name" value="Phosphohistidine domain"/>
    <property type="match status" value="1"/>
</dbReference>
<dbReference type="PROSITE" id="PS00742">
    <property type="entry name" value="PEP_ENZYMES_2"/>
    <property type="match status" value="1"/>
</dbReference>
<dbReference type="PROSITE" id="PS00370">
    <property type="entry name" value="PEP_ENZYMES_PHOS_SITE"/>
    <property type="match status" value="1"/>
</dbReference>
<keyword id="KW-0067">ATP-binding</keyword>
<keyword id="KW-0418">Kinase</keyword>
<keyword id="KW-0460">Magnesium</keyword>
<keyword id="KW-0479">Metal-binding</keyword>
<keyword id="KW-0547">Nucleotide-binding</keyword>
<keyword id="KW-0597">Phosphoprotein</keyword>
<keyword id="KW-0808">Transferase</keyword>
<evidence type="ECO:0000250" key="1"/>
<evidence type="ECO:0000250" key="2">
    <source>
        <dbReference type="UniProtKB" id="P11155"/>
    </source>
</evidence>
<evidence type="ECO:0000250" key="3">
    <source>
        <dbReference type="UniProtKB" id="P22983"/>
    </source>
</evidence>
<evidence type="ECO:0000255" key="4"/>
<evidence type="ECO:0000305" key="5"/>
<feature type="chain" id="PRO_0000147048" description="Pyruvate, phosphate dikinase">
    <location>
        <begin position="1"/>
        <end position="878"/>
    </location>
</feature>
<feature type="region of interest" description="N-terminal">
    <location>
        <begin position="1"/>
        <end position="347"/>
    </location>
</feature>
<feature type="region of interest" description="Linker 1">
    <location>
        <begin position="348"/>
        <end position="404"/>
    </location>
</feature>
<feature type="region of interest" description="Central">
    <location>
        <begin position="405"/>
        <end position="502"/>
    </location>
</feature>
<feature type="region of interest" description="Linker 2">
    <location>
        <begin position="503"/>
        <end position="537"/>
    </location>
</feature>
<feature type="region of interest" description="C-terminal">
    <location>
        <begin position="538"/>
        <end position="878"/>
    </location>
</feature>
<feature type="active site" description="Tele-phosphohistidine intermediate" evidence="2">
    <location>
        <position position="459"/>
    </location>
</feature>
<feature type="active site" description="Proton donor" evidence="2">
    <location>
        <position position="835"/>
    </location>
</feature>
<feature type="binding site" evidence="4">
    <location>
        <position position="96"/>
    </location>
    <ligand>
        <name>ATP</name>
        <dbReference type="ChEBI" id="CHEBI:30616"/>
    </ligand>
</feature>
<feature type="binding site" evidence="2">
    <location>
        <position position="565"/>
    </location>
    <ligand>
        <name>substrate</name>
    </ligand>
</feature>
<feature type="binding site" evidence="2">
    <location>
        <position position="621"/>
    </location>
    <ligand>
        <name>substrate</name>
    </ligand>
</feature>
<feature type="binding site" evidence="2">
    <location>
        <position position="749"/>
    </location>
    <ligand>
        <name>Mg(2+)</name>
        <dbReference type="ChEBI" id="CHEBI:18420"/>
    </ligand>
</feature>
<feature type="binding site" evidence="2">
    <location>
        <position position="749"/>
    </location>
    <ligand>
        <name>substrate</name>
    </ligand>
</feature>
<feature type="binding site" evidence="2">
    <location>
        <position position="770"/>
    </location>
    <ligand>
        <name>substrate</name>
    </ligand>
</feature>
<feature type="binding site" evidence="2">
    <location>
        <position position="771"/>
    </location>
    <ligand>
        <name>substrate</name>
    </ligand>
</feature>
<feature type="binding site" evidence="2">
    <location>
        <position position="772"/>
    </location>
    <ligand>
        <name>substrate</name>
    </ligand>
</feature>
<feature type="binding site" evidence="2">
    <location>
        <position position="773"/>
    </location>
    <ligand>
        <name>Mg(2+)</name>
        <dbReference type="ChEBI" id="CHEBI:18420"/>
    </ligand>
</feature>
<feature type="binding site" evidence="2">
    <location>
        <position position="773"/>
    </location>
    <ligand>
        <name>substrate</name>
    </ligand>
</feature>
<feature type="modified residue" description="Phosphothreonine; by PDRP1" evidence="1">
    <location>
        <position position="457"/>
    </location>
</feature>
<gene>
    <name type="primary">ppdK</name>
    <name type="ordered locus">RC0783</name>
</gene>
<sequence length="878" mass="97756">MKKLIYYFGSNGSDGNASMKNILGNKGAGLAEMSNLKLPIPDGFTITTELCNYFYTHNNNFPKNFQSDLKKAITELEIITGKIFGSTSNPLLLSVRSGSKVSMPGMMDTILNLGMNNEVCNALADSCGDKRFALDSYKRFLEMYGSTVLSIPSDLFEQICEKHKMQADIHKDSDITVELLEKIIDDFKRLHIKYTKQLINDPYEQLESAIKAVLHSWMSNRAVIYRKINNISEDCGTAINIQAMVFGNLGKTSATGVAFTRSPSTGEKKLFGEFLINAQGEDIVSGTRTPMPIIANDSNSMQAMMPEVFKELSQIAQKLEEHYLDMQDIEFTIENNKLYILQTRTAKRTAIAAINIAVQMVEEKLISKEQALMRIDPESLNQLLHTRIDYSKGLTSIAEGLPASPGAATGIAVFSPYDAEKLSHHHKVILVRHDTSPEDINGMHVSSGIVTIRGGMTSHAAVVARGMGKPCVCGTSNLSIDEKKQILTAGDIVIKQGDIITIDGGSGKIFLGEMPLIQPTFSEESKLILDWADEISSLKVRANAETVNDALVSVKFGAQGIGLCRSEHMFFDKNKIPLVRDMIIAPDIERRKLAVQKLLPLQTEDFKALFRVMKDKPVNIRLLDPPLHEFLPTTEEDKKNLANSLNLPLSMINQRLHAMHEVNPMLGHRGCRLGICSPEIYQMQIEAIFTAIFELHKKEHIECNLELMIPLISNVGEIQKLKMDIYAVIEKLEQRYRYKFSFTLGTMIELPRAALGSKKIAKEVDYFSFGTNDLTQTTYGISRDDIASFLPYYLEEKIFESDPFTTLDEEGVGELIDIAIKRGKSSNANLKLGACGEHAGNPASIEFFHRMNLNYVSCSPYRIPIARIAAAQAKIKHG</sequence>
<organism>
    <name type="scientific">Rickettsia conorii (strain ATCC VR-613 / Malish 7)</name>
    <dbReference type="NCBI Taxonomy" id="272944"/>
    <lineage>
        <taxon>Bacteria</taxon>
        <taxon>Pseudomonadati</taxon>
        <taxon>Pseudomonadota</taxon>
        <taxon>Alphaproteobacteria</taxon>
        <taxon>Rickettsiales</taxon>
        <taxon>Rickettsiaceae</taxon>
        <taxon>Rickettsieae</taxon>
        <taxon>Rickettsia</taxon>
        <taxon>spotted fever group</taxon>
    </lineage>
</organism>
<reference key="1">
    <citation type="journal article" date="2001" name="Science">
        <title>Mechanisms of evolution in Rickettsia conorii and R. prowazekii.</title>
        <authorList>
            <person name="Ogata H."/>
            <person name="Audic S."/>
            <person name="Renesto-Audiffren P."/>
            <person name="Fournier P.-E."/>
            <person name="Barbe V."/>
            <person name="Samson D."/>
            <person name="Roux V."/>
            <person name="Cossart P."/>
            <person name="Weissenbach J."/>
            <person name="Claverie J.-M."/>
            <person name="Raoult D."/>
        </authorList>
    </citation>
    <scope>NUCLEOTIDE SEQUENCE [LARGE SCALE GENOMIC DNA]</scope>
    <source>
        <strain>ATCC VR-613 / Malish 7</strain>
    </source>
</reference>